<evidence type="ECO:0000255" key="1">
    <source>
        <dbReference type="HAMAP-Rule" id="MF_01326"/>
    </source>
</evidence>
<evidence type="ECO:0000305" key="2"/>
<proteinExistence type="inferred from homology"/>
<dbReference type="EMBL" id="CP000485">
    <property type="protein sequence ID" value="ABK83534.1"/>
    <property type="status" value="ALT_INIT"/>
    <property type="molecule type" value="Genomic_DNA"/>
</dbReference>
<dbReference type="RefSeq" id="WP_000558200.1">
    <property type="nucleotide sequence ID" value="NC_008600.1"/>
</dbReference>
<dbReference type="SMR" id="A0R8J1"/>
<dbReference type="GeneID" id="93010932"/>
<dbReference type="KEGG" id="btl:BALH_0119"/>
<dbReference type="HOGENOM" id="CLU_093315_2_0_9"/>
<dbReference type="GO" id="GO:1990904">
    <property type="term" value="C:ribonucleoprotein complex"/>
    <property type="evidence" value="ECO:0007669"/>
    <property type="project" value="UniProtKB-KW"/>
</dbReference>
<dbReference type="GO" id="GO:0005840">
    <property type="term" value="C:ribosome"/>
    <property type="evidence" value="ECO:0007669"/>
    <property type="project" value="UniProtKB-KW"/>
</dbReference>
<dbReference type="GO" id="GO:0019843">
    <property type="term" value="F:rRNA binding"/>
    <property type="evidence" value="ECO:0007669"/>
    <property type="project" value="UniProtKB-UniRule"/>
</dbReference>
<dbReference type="GO" id="GO:0003735">
    <property type="term" value="F:structural constituent of ribosome"/>
    <property type="evidence" value="ECO:0007669"/>
    <property type="project" value="InterPro"/>
</dbReference>
<dbReference type="GO" id="GO:0006412">
    <property type="term" value="P:translation"/>
    <property type="evidence" value="ECO:0007669"/>
    <property type="project" value="UniProtKB-UniRule"/>
</dbReference>
<dbReference type="CDD" id="cd06089">
    <property type="entry name" value="KOW_RPL26"/>
    <property type="match status" value="1"/>
</dbReference>
<dbReference type="FunFam" id="2.30.30.30:FF:000004">
    <property type="entry name" value="50S ribosomal protein L24"/>
    <property type="match status" value="1"/>
</dbReference>
<dbReference type="Gene3D" id="2.30.30.30">
    <property type="match status" value="1"/>
</dbReference>
<dbReference type="HAMAP" id="MF_01326_B">
    <property type="entry name" value="Ribosomal_uL24_B"/>
    <property type="match status" value="1"/>
</dbReference>
<dbReference type="InterPro" id="IPR005824">
    <property type="entry name" value="KOW"/>
</dbReference>
<dbReference type="InterPro" id="IPR014722">
    <property type="entry name" value="Rib_uL2_dom2"/>
</dbReference>
<dbReference type="InterPro" id="IPR003256">
    <property type="entry name" value="Ribosomal_uL24"/>
</dbReference>
<dbReference type="InterPro" id="IPR005825">
    <property type="entry name" value="Ribosomal_uL24_CS"/>
</dbReference>
<dbReference type="InterPro" id="IPR041988">
    <property type="entry name" value="Ribosomal_uL24_KOW"/>
</dbReference>
<dbReference type="InterPro" id="IPR008991">
    <property type="entry name" value="Translation_prot_SH3-like_sf"/>
</dbReference>
<dbReference type="NCBIfam" id="TIGR01079">
    <property type="entry name" value="rplX_bact"/>
    <property type="match status" value="1"/>
</dbReference>
<dbReference type="PANTHER" id="PTHR12903">
    <property type="entry name" value="MITOCHONDRIAL RIBOSOMAL PROTEIN L24"/>
    <property type="match status" value="1"/>
</dbReference>
<dbReference type="Pfam" id="PF00467">
    <property type="entry name" value="KOW"/>
    <property type="match status" value="1"/>
</dbReference>
<dbReference type="Pfam" id="PF17136">
    <property type="entry name" value="ribosomal_L24"/>
    <property type="match status" value="1"/>
</dbReference>
<dbReference type="SMART" id="SM00739">
    <property type="entry name" value="KOW"/>
    <property type="match status" value="1"/>
</dbReference>
<dbReference type="SUPFAM" id="SSF50104">
    <property type="entry name" value="Translation proteins SH3-like domain"/>
    <property type="match status" value="1"/>
</dbReference>
<dbReference type="PROSITE" id="PS01108">
    <property type="entry name" value="RIBOSOMAL_L24"/>
    <property type="match status" value="1"/>
</dbReference>
<comment type="function">
    <text evidence="1">One of two assembly initiator proteins, it binds directly to the 5'-end of the 23S rRNA, where it nucleates assembly of the 50S subunit.</text>
</comment>
<comment type="function">
    <text evidence="1">One of the proteins that surrounds the polypeptide exit tunnel on the outside of the subunit.</text>
</comment>
<comment type="subunit">
    <text evidence="1">Part of the 50S ribosomal subunit.</text>
</comment>
<comment type="similarity">
    <text evidence="1">Belongs to the universal ribosomal protein uL24 family.</text>
</comment>
<comment type="sequence caution" evidence="2">
    <conflict type="erroneous initiation">
        <sequence resource="EMBL-CDS" id="ABK83534"/>
    </conflict>
</comment>
<gene>
    <name evidence="1" type="primary">rplX</name>
    <name type="ordered locus">BALH_0119</name>
</gene>
<protein>
    <recommendedName>
        <fullName evidence="1">Large ribosomal subunit protein uL24</fullName>
    </recommendedName>
    <alternativeName>
        <fullName evidence="2">50S ribosomal protein L24</fullName>
    </alternativeName>
</protein>
<name>RL24_BACAH</name>
<keyword id="KW-0687">Ribonucleoprotein</keyword>
<keyword id="KW-0689">Ribosomal protein</keyword>
<keyword id="KW-0694">RNA-binding</keyword>
<keyword id="KW-0699">rRNA-binding</keyword>
<accession>A0R8J1</accession>
<sequence length="103" mass="11228">MHVKKGDKVQVITGKDKGKQGVILVAFPKQNRVIVEGVNIVKKHSKPSQLNPQGGIITKEAPIHVSNVMILDPKTGEPTRVGFKVEDGKKVRIAKKSGELLDK</sequence>
<organism>
    <name type="scientific">Bacillus thuringiensis (strain Al Hakam)</name>
    <dbReference type="NCBI Taxonomy" id="412694"/>
    <lineage>
        <taxon>Bacteria</taxon>
        <taxon>Bacillati</taxon>
        <taxon>Bacillota</taxon>
        <taxon>Bacilli</taxon>
        <taxon>Bacillales</taxon>
        <taxon>Bacillaceae</taxon>
        <taxon>Bacillus</taxon>
        <taxon>Bacillus cereus group</taxon>
    </lineage>
</organism>
<feature type="chain" id="PRO_0000355646" description="Large ribosomal subunit protein uL24">
    <location>
        <begin position="1"/>
        <end position="103"/>
    </location>
</feature>
<reference key="1">
    <citation type="journal article" date="2007" name="J. Bacteriol.">
        <title>The complete genome sequence of Bacillus thuringiensis Al Hakam.</title>
        <authorList>
            <person name="Challacombe J.F."/>
            <person name="Altherr M.R."/>
            <person name="Xie G."/>
            <person name="Bhotika S.S."/>
            <person name="Brown N."/>
            <person name="Bruce D."/>
            <person name="Campbell C.S."/>
            <person name="Campbell M.L."/>
            <person name="Chen J."/>
            <person name="Chertkov O."/>
            <person name="Cleland C."/>
            <person name="Dimitrijevic M."/>
            <person name="Doggett N.A."/>
            <person name="Fawcett J.J."/>
            <person name="Glavina T."/>
            <person name="Goodwin L.A."/>
            <person name="Green L.D."/>
            <person name="Han C.S."/>
            <person name="Hill K.K."/>
            <person name="Hitchcock P."/>
            <person name="Jackson P.J."/>
            <person name="Keim P."/>
            <person name="Kewalramani A.R."/>
            <person name="Longmire J."/>
            <person name="Lucas S."/>
            <person name="Malfatti S."/>
            <person name="Martinez D."/>
            <person name="McMurry K."/>
            <person name="Meincke L.J."/>
            <person name="Misra M."/>
            <person name="Moseman B.L."/>
            <person name="Mundt M."/>
            <person name="Munk A.C."/>
            <person name="Okinaka R.T."/>
            <person name="Parson-Quintana B."/>
            <person name="Reilly L.P."/>
            <person name="Richardson P."/>
            <person name="Robinson D.L."/>
            <person name="Saunders E."/>
            <person name="Tapia R."/>
            <person name="Tesmer J.G."/>
            <person name="Thayer N."/>
            <person name="Thompson L.S."/>
            <person name="Tice H."/>
            <person name="Ticknor L.O."/>
            <person name="Wills P.L."/>
            <person name="Gilna P."/>
            <person name="Brettin T.S."/>
        </authorList>
    </citation>
    <scope>NUCLEOTIDE SEQUENCE [LARGE SCALE GENOMIC DNA]</scope>
    <source>
        <strain>Al Hakam</strain>
    </source>
</reference>